<protein>
    <recommendedName>
        <fullName>Alpha-elapitoxin-Nss2a</fullName>
        <shortName>Alpha-EPTX-Nss2a</shortName>
    </recommendedName>
    <alternativeName>
        <fullName>Long neurotoxin 1</fullName>
        <shortName>LNTX-1</shortName>
    </alternativeName>
    <alternativeName>
        <fullName>Notechis III-4</fullName>
    </alternativeName>
</protein>
<accession>P01384</accession>
<accession>A8HDK3</accession>
<proteinExistence type="evidence at protein level"/>
<name>3L21_NOTSC</name>
<organism>
    <name type="scientific">Notechis scutatus scutatus</name>
    <name type="common">Mainland tiger snake</name>
    <name type="synonym">Common tiger snake</name>
    <dbReference type="NCBI Taxonomy" id="70142"/>
    <lineage>
        <taxon>Eukaryota</taxon>
        <taxon>Metazoa</taxon>
        <taxon>Chordata</taxon>
        <taxon>Craniata</taxon>
        <taxon>Vertebrata</taxon>
        <taxon>Euteleostomi</taxon>
        <taxon>Lepidosauria</taxon>
        <taxon>Squamata</taxon>
        <taxon>Bifurcata</taxon>
        <taxon>Unidentata</taxon>
        <taxon>Episquamata</taxon>
        <taxon>Toxicofera</taxon>
        <taxon>Serpentes</taxon>
        <taxon>Colubroidea</taxon>
        <taxon>Elapidae</taxon>
        <taxon>Hydrophiinae</taxon>
        <taxon>Notechis</taxon>
    </lineage>
</organism>
<comment type="function">
    <text evidence="2">Binds with high affinity to muscular (alpha-1/CHRNA1) and neuronal (alpha-7/CHRNA7) nicotinic acetylcholine receptor (nAChR) and inhibits acetylcholine from binding to the receptor, thereby impairing neuromuscular and neuronal transmission.</text>
</comment>
<comment type="subcellular location">
    <subcellularLocation>
        <location evidence="3">Secreted</location>
    </subcellularLocation>
</comment>
<comment type="tissue specificity">
    <text evidence="4">Expressed by the venom gland.</text>
</comment>
<comment type="toxic dose">
    <text evidence="3">LD(50) is 0.125 mg/kg by intravenous injection.</text>
</comment>
<comment type="similarity">
    <text evidence="4">Belongs to the three-finger toxin family. Long-chain subfamily. Type II alpha-neurotoxin sub-subfamily.</text>
</comment>
<evidence type="ECO:0000250" key="1"/>
<evidence type="ECO:0000250" key="2">
    <source>
        <dbReference type="UniProtKB" id="P60615"/>
    </source>
</evidence>
<evidence type="ECO:0000269" key="3">
    <source>
    </source>
</evidence>
<evidence type="ECO:0000305" key="4"/>
<dbReference type="EMBL" id="DQ917508">
    <property type="protein sequence ID" value="ABK63537.1"/>
    <property type="molecule type" value="mRNA"/>
</dbReference>
<dbReference type="PIR" id="A01655">
    <property type="entry name" value="N2NO1"/>
</dbReference>
<dbReference type="SMR" id="P01384"/>
<dbReference type="GO" id="GO:0005576">
    <property type="term" value="C:extracellular region"/>
    <property type="evidence" value="ECO:0007669"/>
    <property type="project" value="UniProtKB-SubCell"/>
</dbReference>
<dbReference type="GO" id="GO:0030550">
    <property type="term" value="F:acetylcholine receptor inhibitor activity"/>
    <property type="evidence" value="ECO:0007669"/>
    <property type="project" value="UniProtKB-KW"/>
</dbReference>
<dbReference type="GO" id="GO:0099106">
    <property type="term" value="F:ion channel regulator activity"/>
    <property type="evidence" value="ECO:0007669"/>
    <property type="project" value="UniProtKB-KW"/>
</dbReference>
<dbReference type="GO" id="GO:0090729">
    <property type="term" value="F:toxin activity"/>
    <property type="evidence" value="ECO:0007669"/>
    <property type="project" value="UniProtKB-KW"/>
</dbReference>
<dbReference type="CDD" id="cd00206">
    <property type="entry name" value="TFP_snake_toxin"/>
    <property type="match status" value="1"/>
</dbReference>
<dbReference type="Gene3D" id="2.10.60.10">
    <property type="entry name" value="CD59"/>
    <property type="match status" value="1"/>
</dbReference>
<dbReference type="InterPro" id="IPR003571">
    <property type="entry name" value="Snake_3FTx"/>
</dbReference>
<dbReference type="InterPro" id="IPR045860">
    <property type="entry name" value="Snake_toxin-like_sf"/>
</dbReference>
<dbReference type="InterPro" id="IPR018354">
    <property type="entry name" value="Snake_toxin_con_site"/>
</dbReference>
<dbReference type="InterPro" id="IPR054131">
    <property type="entry name" value="Toxin_cobra-type"/>
</dbReference>
<dbReference type="Pfam" id="PF21947">
    <property type="entry name" value="Toxin_cobra-type"/>
    <property type="match status" value="1"/>
</dbReference>
<dbReference type="SUPFAM" id="SSF57302">
    <property type="entry name" value="Snake toxin-like"/>
    <property type="match status" value="1"/>
</dbReference>
<dbReference type="PROSITE" id="PS00272">
    <property type="entry name" value="SNAKE_TOXIN"/>
    <property type="match status" value="1"/>
</dbReference>
<reference key="1">
    <citation type="journal article" date="2007" name="Cell. Mol. Life Sci.">
        <title>Distinct activities of novel neurotoxins from Australian venomous snakes for nicotinic acetylcholine receptors.</title>
        <authorList>
            <person name="St Pierre L."/>
            <person name="Fischer H."/>
            <person name="Adams D.J."/>
            <person name="Schenning M."/>
            <person name="Lavidis N."/>
            <person name="de Jersey J."/>
            <person name="Masci P.P."/>
            <person name="Lavin M.F."/>
        </authorList>
    </citation>
    <scope>NUCLEOTIDE SEQUENCE [MRNA]</scope>
    <source>
        <tissue>Venom gland</tissue>
    </source>
</reference>
<reference key="2">
    <citation type="journal article" date="1979" name="Biochimie">
        <title>Amino acid sequence of a postsynaptic neurotoxin from the venom of the Australian tiger snake Notechis scutatus scutatus.</title>
        <authorList>
            <person name="Halpert J."/>
            <person name="Fohlman J."/>
            <person name="Eaker D."/>
        </authorList>
    </citation>
    <scope>PROTEIN SEQUENCE OF 22-94</scope>
    <scope>TOXIC DOSE</scope>
    <scope>SUBCELLULAR LOCATION</scope>
    <source>
        <tissue>Venom</tissue>
    </source>
</reference>
<keyword id="KW-0008">Acetylcholine receptor inhibiting toxin</keyword>
<keyword id="KW-0903">Direct protein sequencing</keyword>
<keyword id="KW-1015">Disulfide bond</keyword>
<keyword id="KW-0872">Ion channel impairing toxin</keyword>
<keyword id="KW-0528">Neurotoxin</keyword>
<keyword id="KW-0629">Postsynaptic neurotoxin</keyword>
<keyword id="KW-0964">Secreted</keyword>
<keyword id="KW-0732">Signal</keyword>
<keyword id="KW-0800">Toxin</keyword>
<feature type="signal peptide" evidence="3">
    <location>
        <begin position="1"/>
        <end position="21"/>
    </location>
</feature>
<feature type="chain" id="PRO_0000093555" description="Alpha-elapitoxin-Nss2a">
    <location>
        <begin position="22"/>
        <end position="94"/>
    </location>
</feature>
<feature type="disulfide bond" evidence="1">
    <location>
        <begin position="24"/>
        <end position="41"/>
    </location>
</feature>
<feature type="disulfide bond" evidence="1">
    <location>
        <begin position="34"/>
        <end position="62"/>
    </location>
</feature>
<feature type="disulfide bond" evidence="1">
    <location>
        <begin position="47"/>
        <end position="51"/>
    </location>
</feature>
<feature type="disulfide bond" evidence="1">
    <location>
        <begin position="66"/>
        <end position="77"/>
    </location>
</feature>
<feature type="disulfide bond" evidence="1">
    <location>
        <begin position="78"/>
        <end position="83"/>
    </location>
</feature>
<feature type="sequence conflict" description="In Ref. 2; AA sequence." evidence="4" ref="2">
    <original>PH</original>
    <variation>HP</variation>
    <location>
        <begin position="92"/>
        <end position="93"/>
    </location>
</feature>
<sequence length="94" mass="10289">MKTLLLTLVVVTIVCLDLGDSLICYMGPKTPRTCPRGQNLCYTKTWCDAFCSSRGKVVELGCAATCPIAKSYEDVTCCSTDNCNPFPVRPRPHP</sequence>